<protein>
    <recommendedName>
        <fullName evidence="9">SPI-2 type 3 secretion system translocon protein SctB</fullName>
        <shortName evidence="9">SPI-2 T3SS translocon protein SctB</shortName>
    </recommendedName>
    <alternativeName>
        <fullName>Secreted effector protein SseD</fullName>
    </alternativeName>
    <alternativeName>
        <fullName>Secretion system effector D</fullName>
    </alternativeName>
</protein>
<evidence type="ECO:0000255" key="1"/>
<evidence type="ECO:0000269" key="2">
    <source>
    </source>
</evidence>
<evidence type="ECO:0000269" key="3">
    <source>
    </source>
</evidence>
<evidence type="ECO:0000269" key="4">
    <source>
    </source>
</evidence>
<evidence type="ECO:0000269" key="5">
    <source>
    </source>
</evidence>
<evidence type="ECO:0000269" key="6">
    <source>
    </source>
</evidence>
<evidence type="ECO:0000269" key="7">
    <source>
    </source>
</evidence>
<evidence type="ECO:0000303" key="8">
    <source>
    </source>
</evidence>
<evidence type="ECO:0000305" key="9"/>
<evidence type="ECO:0000305" key="10">
    <source>
    </source>
</evidence>
<reference key="1">
    <citation type="journal article" date="1998" name="Mol. Microbiol.">
        <title>Genes encoding putative effector proteins of the type III secretion system of Salmonella pathogenicity island 2 are required for bacterial virulence and proliferation in macrophages.</title>
        <authorList>
            <person name="Hensel M."/>
            <person name="Shea J.E."/>
            <person name="Waterman S.R."/>
            <person name="Mundy R."/>
            <person name="Nikolaus T."/>
            <person name="Banks G."/>
            <person name="Vazquez-Torres A."/>
            <person name="Gleeson C."/>
            <person name="Fang F.C."/>
            <person name="Holden D.W."/>
        </authorList>
    </citation>
    <scope>NUCLEOTIDE SEQUENCE [GENOMIC DNA]</scope>
    <source>
        <strain>ATCC 14028 / SGSC 2980 / CDC 6516-60 / NCTC 12023</strain>
    </source>
</reference>
<reference key="2">
    <citation type="journal article" date="1998" name="Mol. Microbiol.">
        <title>Macrophage-dependent induction of the Salmonella pathogenicity island 2 type III secretion system and its role in intracellular survival.</title>
        <authorList>
            <person name="Cirillo D.M."/>
            <person name="Valdivia R.H."/>
            <person name="Monack D.M."/>
            <person name="Falkow S."/>
        </authorList>
    </citation>
    <scope>NUCLEOTIDE SEQUENCE [GENOMIC DNA]</scope>
    <source>
        <strain>SL1344</strain>
    </source>
</reference>
<reference key="3">
    <citation type="journal article" date="2001" name="Nature">
        <title>Complete genome sequence of Salmonella enterica serovar Typhimurium LT2.</title>
        <authorList>
            <person name="McClelland M."/>
            <person name="Sanderson K.E."/>
            <person name="Spieth J."/>
            <person name="Clifton S.W."/>
            <person name="Latreille P."/>
            <person name="Courtney L."/>
            <person name="Porwollik S."/>
            <person name="Ali J."/>
            <person name="Dante M."/>
            <person name="Du F."/>
            <person name="Hou S."/>
            <person name="Layman D."/>
            <person name="Leonard S."/>
            <person name="Nguyen C."/>
            <person name="Scott K."/>
            <person name="Holmes A."/>
            <person name="Grewal N."/>
            <person name="Mulvaney E."/>
            <person name="Ryan E."/>
            <person name="Sun H."/>
            <person name="Florea L."/>
            <person name="Miller W."/>
            <person name="Stoneking T."/>
            <person name="Nhan M."/>
            <person name="Waterston R."/>
            <person name="Wilson R.K."/>
        </authorList>
    </citation>
    <scope>NUCLEOTIDE SEQUENCE [LARGE SCALE GENOMIC DNA]</scope>
    <source>
        <strain>LT2 / SGSC1412 / ATCC 700720</strain>
    </source>
</reference>
<reference key="4">
    <citation type="journal article" date="2001" name="J. Bacteriol.">
        <title>SseBCD proteins are secreted by the type III secretion system of Salmonella pathogenicity island 2 and function as a translocon.</title>
        <authorList>
            <person name="Nikolaus T."/>
            <person name="Deiwick J."/>
            <person name="Rappl C."/>
            <person name="Freeman J.A."/>
            <person name="Schroder W."/>
            <person name="Miller S.I."/>
            <person name="Hensel M."/>
        </authorList>
    </citation>
    <scope>PROTEIN SEQUENCE OF 2-9</scope>
    <scope>FUNCTION</scope>
    <scope>SUBUNIT</scope>
    <scope>SUBCELLULAR LOCATION</scope>
    <scope>SECRETION VIA TYPE III SECRETION SYSTEM</scope>
    <source>
        <strain>ATCC 14028 / SGSC 2980 / CDC 6516-60 / NCTC 12023</strain>
    </source>
</reference>
<reference key="5">
    <citation type="journal article" date="2001" name="Infect. Immun.">
        <title>Salmonella pathogenicity island 2-encoded proteins SseC and SseD are essential for virulence and are substrates of the type III secretion system.</title>
        <authorList>
            <person name="Klein J.R."/>
            <person name="Jones B.D."/>
        </authorList>
    </citation>
    <scope>FUNCTION IN VIRULENCE</scope>
    <scope>SUBCELLULAR LOCATION</scope>
    <scope>SECRETION VIA TYPE III SECRETION SYSTEM</scope>
    <source>
        <strain>SL1344</strain>
    </source>
</reference>
<reference key="6">
    <citation type="journal article" date="2003" name="Microbiology">
        <title>SseA is a chaperone for the SseB and SseD translocon components of the Salmonella pathogenicity-island-2-encoded type III secretion system.</title>
        <authorList>
            <person name="Ruiz-Albert J."/>
            <person name="Mundy R."/>
            <person name="Yu X.J."/>
            <person name="Beuzon C.R."/>
            <person name="Holden D.W."/>
        </authorList>
    </citation>
    <scope>INTERACTION WITH SSEA</scope>
    <source>
        <strain>ATCC 14028 / SGSC 2980 / CDC 6516-60 / NCTC 12023</strain>
    </source>
</reference>
<reference key="7">
    <citation type="journal article" date="2004" name="Microbiology">
        <title>The SPI2-encoded SseA chaperone has discrete domains required for SseB stabilization and export, and binds within the C-terminus of SseB and SseD.</title>
        <authorList>
            <person name="Zurawski D.V."/>
            <person name="Stein M.A."/>
        </authorList>
    </citation>
    <scope>INTERACTION WITH SSEA</scope>
    <source>
        <strain>SL1344</strain>
    </source>
</reference>
<reference key="8">
    <citation type="journal article" date="2008" name="FEMS Immunol. Med. Microbiol.">
        <title>Identification of Salmonella SPI-2 secretion system components required for SpvB-mediated cytotoxicity in macrophages and virulence in mice.</title>
        <authorList>
            <person name="Browne S.H."/>
            <person name="Hasegawa P."/>
            <person name="Okamoto S."/>
            <person name="Fierer J."/>
            <person name="Guiney D.G."/>
        </authorList>
    </citation>
    <scope>ROLE IN SPVB EXPORT</scope>
    <scope>DISRUPTION PHENOTYPE</scope>
    <source>
        <strain>LT2 / SGSC1412 / ATCC 700720</strain>
    </source>
</reference>
<reference key="9">
    <citation type="journal article" date="2018" name="FEMS Microbiol. Lett.">
        <title>Bacterial type III secretion systems: a complex device for the delivery of bacterial effector proteins into eukaryotic host cells.</title>
        <authorList>
            <person name="Wagner S."/>
            <person name="Grin I."/>
            <person name="Malmsheimer S."/>
            <person name="Singh N."/>
            <person name="Torres-Vargas C.E."/>
            <person name="Westerhausen S."/>
        </authorList>
    </citation>
    <scope>REVIEW</scope>
    <scope>NOMENCLATURE</scope>
    <scope>SUBUNIT</scope>
</reference>
<name>SCTB2_SALTY</name>
<proteinExistence type="evidence at protein level"/>
<organism>
    <name type="scientific">Salmonella typhimurium (strain LT2 / SGSC1412 / ATCC 700720)</name>
    <dbReference type="NCBI Taxonomy" id="99287"/>
    <lineage>
        <taxon>Bacteria</taxon>
        <taxon>Pseudomonadati</taxon>
        <taxon>Pseudomonadota</taxon>
        <taxon>Gammaproteobacteria</taxon>
        <taxon>Enterobacterales</taxon>
        <taxon>Enterobacteriaceae</taxon>
        <taxon>Salmonella</taxon>
    </lineage>
</organism>
<dbReference type="EMBL" id="AJ224892">
    <property type="protein sequence ID" value="CAA12188.1"/>
    <property type="molecule type" value="Genomic_DNA"/>
</dbReference>
<dbReference type="EMBL" id="AF020808">
    <property type="protein sequence ID" value="AAC28882.1"/>
    <property type="molecule type" value="Genomic_DNA"/>
</dbReference>
<dbReference type="EMBL" id="AE006468">
    <property type="protein sequence ID" value="AAL20325.1"/>
    <property type="molecule type" value="Genomic_DNA"/>
</dbReference>
<dbReference type="RefSeq" id="NP_460366.1">
    <property type="nucleotide sequence ID" value="NC_003197.2"/>
</dbReference>
<dbReference type="RefSeq" id="WP_000388323.1">
    <property type="nucleotide sequence ID" value="NC_003197.2"/>
</dbReference>
<dbReference type="SMR" id="Q9R803"/>
<dbReference type="IntAct" id="Q9R803">
    <property type="interactions" value="1"/>
</dbReference>
<dbReference type="STRING" id="99287.STM1401"/>
<dbReference type="TCDB" id="1.C.36.5.1">
    <property type="family name" value="the bacterial type iii-target cell pore (iiitcp) family"/>
</dbReference>
<dbReference type="PaxDb" id="99287-STM1401"/>
<dbReference type="GeneID" id="1252919"/>
<dbReference type="KEGG" id="stm:STM1401"/>
<dbReference type="PATRIC" id="fig|99287.12.peg.1485"/>
<dbReference type="HOGENOM" id="CLU_120485_0_0_6"/>
<dbReference type="OMA" id="IWTKLME"/>
<dbReference type="BioCyc" id="SENT99287:STM1401-MONOMER"/>
<dbReference type="Proteomes" id="UP000001014">
    <property type="component" value="Chromosome"/>
</dbReference>
<dbReference type="GO" id="GO:0009986">
    <property type="term" value="C:cell surface"/>
    <property type="evidence" value="ECO:0000314"/>
    <property type="project" value="UniProtKB"/>
</dbReference>
<dbReference type="GO" id="GO:0005576">
    <property type="term" value="C:extracellular region"/>
    <property type="evidence" value="ECO:0007669"/>
    <property type="project" value="UniProtKB-SubCell"/>
</dbReference>
<dbReference type="GO" id="GO:0033644">
    <property type="term" value="C:host cell membrane"/>
    <property type="evidence" value="ECO:0007669"/>
    <property type="project" value="UniProtKB-SubCell"/>
</dbReference>
<dbReference type="GO" id="GO:0016020">
    <property type="term" value="C:membrane"/>
    <property type="evidence" value="ECO:0007669"/>
    <property type="project" value="UniProtKB-KW"/>
</dbReference>
<dbReference type="GO" id="GO:0030254">
    <property type="term" value="P:protein secretion by the type III secretion system"/>
    <property type="evidence" value="ECO:0000314"/>
    <property type="project" value="UniProtKB"/>
</dbReference>
<dbReference type="InterPro" id="IPR008611">
    <property type="entry name" value="SctB2-like"/>
</dbReference>
<dbReference type="NCBIfam" id="NF011888">
    <property type="entry name" value="PRK15361.1"/>
    <property type="match status" value="1"/>
</dbReference>
<dbReference type="Pfam" id="PF05802">
    <property type="entry name" value="SctB2"/>
    <property type="match status" value="1"/>
</dbReference>
<comment type="function">
    <text evidence="10">Component of the type III secretion system 2 (SPI-2 T3SS), also called injectisome, which is used to inject bacterial effector proteins into eukaryotic host cells (Probable). SseC/SctE2 and SseD/SctB2 are inserted into the host membrane where they form a pore and allow the translocation of effector proteins into the cytosol of target cells (Probable).</text>
</comment>
<comment type="function">
    <text evidence="2 3 6">Required for the translocation of SPI-2 effector proteins (PubMed:11567004). Required for systemic Salmonella infection of the mouse (PubMed:11159962). Essential for SpvB-induced actin depolymerization in the host cell cytoplasm (PubMed:18248436).</text>
</comment>
<comment type="subunit">
    <text evidence="3 4 5 7 10">The core secretion machinery of the T3SS is composed of approximately 20 different proteins, including cytoplasmic components, a base, an export apparatus and a needle (PubMed:30107569). This subunit is involved in the formation of a pore, called the translocon, in host membrane (Probable). May form a complex with SseB and SseC/SctE2 (PubMed:11567004). SseB is required for correct localization of SseD/SctB2 on the bacterial cell surface (PubMed:11567004). Binds to the chaperone SseA (PubMed:12724372, PubMed:15256549).</text>
</comment>
<comment type="interaction">
    <interactant intactId="EBI-2272067">
        <id>Q9R803</id>
    </interactant>
    <interactant intactId="EBI-2030631">
        <id>O84944</id>
        <label>sseA</label>
    </interactant>
    <organismsDiffer>false</organismsDiffer>
    <experiments>2</experiments>
</comment>
<comment type="subcellular location">
    <subcellularLocation>
        <location evidence="2 3">Secreted</location>
    </subcellularLocation>
    <subcellularLocation>
        <location evidence="2 3">Cell surface</location>
    </subcellularLocation>
    <subcellularLocation>
        <location evidence="9">Host membrane</location>
        <topology evidence="1">Multi-pass membrane protein</topology>
    </subcellularLocation>
    <text evidence="2 3">Secreted via the type III secretion system 2 (SPI-2 T3SS) (PubMed:11159962, PubMed:11567004). After secretion, localizes mainly on the surface of the bacterial cell (PubMed:11159962, PubMed:11567004).</text>
</comment>
<comment type="disruption phenotype">
    <text evidence="6">Disruption prevents SpvB-induced F-actin depolymerization in human macrophages without affecting intra-bacterial SpvB protein levels.</text>
</comment>
<comment type="similarity">
    <text evidence="9">Belongs to the SctB/EspB family.</text>
</comment>
<keyword id="KW-0175">Coiled coil</keyword>
<keyword id="KW-0903">Direct protein sequencing</keyword>
<keyword id="KW-1043">Host membrane</keyword>
<keyword id="KW-0472">Membrane</keyword>
<keyword id="KW-1185">Reference proteome</keyword>
<keyword id="KW-0964">Secreted</keyword>
<keyword id="KW-0812">Transmembrane</keyword>
<keyword id="KW-1133">Transmembrane helix</keyword>
<keyword id="KW-0843">Virulence</keyword>
<feature type="chain" id="PRO_0000391717" description="SPI-2 type 3 secretion system translocon protein SctB">
    <location>
        <begin position="1"/>
        <end position="195"/>
    </location>
</feature>
<feature type="transmembrane region" description="Helical" evidence="1">
    <location>
        <begin position="90"/>
        <end position="110"/>
    </location>
</feature>
<feature type="transmembrane region" description="Helical" evidence="1">
    <location>
        <begin position="115"/>
        <end position="135"/>
    </location>
</feature>
<feature type="transmembrane region" description="Helical" evidence="1">
    <location>
        <begin position="170"/>
        <end position="190"/>
    </location>
</feature>
<feature type="coiled-coil region" evidence="1">
    <location>
        <begin position="44"/>
        <end position="80"/>
    </location>
</feature>
<feature type="sequence conflict" description="In Ref. 2; AAC28882." evidence="9" ref="2">
    <original>G</original>
    <variation>R</variation>
    <location>
        <position position="153"/>
    </location>
</feature>
<sequence>MEASNVALVLPAPSLLTPSSTPSPSGEGMGTESMLLLFDDIWMKLMELAKKLRDIMRSYNVEKQRLAWELQVNVLQTQMKTIDEAFRASMITAGGAMLSGVLTIGLGAVGGETGLIAGQAVGHTAGGVMGLGAGVAQRQSDQDKAIADLQQNGAQSYNKSLTEIMEKATEIMQQIIGVGSSLVTVLAEILRALTR</sequence>
<gene>
    <name evidence="8" type="primary">sctB2</name>
    <name evidence="8" type="synonym">sseD</name>
    <name type="ordered locus">STM1401</name>
</gene>
<accession>Q9R803</accession>
<accession>O84948</accession>
<accession>Q7CQL8</accession>